<name>PTHP_BORBU</name>
<keyword id="KW-0963">Cytoplasm</keyword>
<keyword id="KW-0598">Phosphotransferase system</keyword>
<keyword id="KW-1185">Reference proteome</keyword>
<keyword id="KW-0762">Sugar transport</keyword>
<keyword id="KW-0813">Transport</keyword>
<protein>
    <recommendedName>
        <fullName>Phosphocarrier protein HPr</fullName>
    </recommendedName>
    <alternativeName>
        <fullName>Histidine-containing protein</fullName>
    </alternativeName>
</protein>
<organism>
    <name type="scientific">Borreliella burgdorferi (strain ATCC 35210 / DSM 4680 / CIP 102532 / B31)</name>
    <name type="common">Borrelia burgdorferi</name>
    <dbReference type="NCBI Taxonomy" id="224326"/>
    <lineage>
        <taxon>Bacteria</taxon>
        <taxon>Pseudomonadati</taxon>
        <taxon>Spirochaetota</taxon>
        <taxon>Spirochaetia</taxon>
        <taxon>Spirochaetales</taxon>
        <taxon>Borreliaceae</taxon>
        <taxon>Borreliella</taxon>
    </lineage>
</organism>
<dbReference type="EMBL" id="AE000783">
    <property type="protein sequence ID" value="AAC66922.1"/>
    <property type="molecule type" value="Genomic_DNA"/>
</dbReference>
<dbReference type="PIR" id="D70169">
    <property type="entry name" value="D70169"/>
</dbReference>
<dbReference type="RefSeq" id="NP_212691.1">
    <property type="nucleotide sequence ID" value="NC_001318.1"/>
</dbReference>
<dbReference type="RefSeq" id="WP_002557145.1">
    <property type="nucleotide sequence ID" value="NC_001318.1"/>
</dbReference>
<dbReference type="SMR" id="O51507"/>
<dbReference type="STRING" id="224326.BB_0557"/>
<dbReference type="PaxDb" id="224326-BB_0557"/>
<dbReference type="EnsemblBacteria" id="AAC66922">
    <property type="protein sequence ID" value="AAC66922"/>
    <property type="gene ID" value="BB_0557"/>
</dbReference>
<dbReference type="KEGG" id="bbu:BB_0557"/>
<dbReference type="PATRIC" id="fig|224326.49.peg.948"/>
<dbReference type="HOGENOM" id="CLU_136230_2_2_12"/>
<dbReference type="OrthoDB" id="350754at2"/>
<dbReference type="PRO" id="PR:O51507"/>
<dbReference type="Proteomes" id="UP000001807">
    <property type="component" value="Chromosome"/>
</dbReference>
<dbReference type="GO" id="GO:0005737">
    <property type="term" value="C:cytoplasm"/>
    <property type="evidence" value="ECO:0007669"/>
    <property type="project" value="UniProtKB-SubCell"/>
</dbReference>
<dbReference type="GO" id="GO:0009401">
    <property type="term" value="P:phosphoenolpyruvate-dependent sugar phosphotransferase system"/>
    <property type="evidence" value="ECO:0007669"/>
    <property type="project" value="UniProtKB-KW"/>
</dbReference>
<dbReference type="CDD" id="cd00367">
    <property type="entry name" value="PTS-HPr_like"/>
    <property type="match status" value="1"/>
</dbReference>
<dbReference type="Gene3D" id="3.30.1340.10">
    <property type="entry name" value="HPr-like"/>
    <property type="match status" value="1"/>
</dbReference>
<dbReference type="InterPro" id="IPR050399">
    <property type="entry name" value="HPr"/>
</dbReference>
<dbReference type="InterPro" id="IPR000032">
    <property type="entry name" value="HPr-like"/>
</dbReference>
<dbReference type="InterPro" id="IPR035895">
    <property type="entry name" value="HPr-like_sf"/>
</dbReference>
<dbReference type="InterPro" id="IPR001020">
    <property type="entry name" value="PTS_HPr_His_P_site"/>
</dbReference>
<dbReference type="InterPro" id="IPR002114">
    <property type="entry name" value="PTS_HPr_Ser_P_site"/>
</dbReference>
<dbReference type="NCBIfam" id="TIGR01003">
    <property type="entry name" value="PTS_HPr_family"/>
    <property type="match status" value="1"/>
</dbReference>
<dbReference type="PANTHER" id="PTHR33705">
    <property type="entry name" value="PHOSPHOCARRIER PROTEIN HPR"/>
    <property type="match status" value="1"/>
</dbReference>
<dbReference type="PANTHER" id="PTHR33705:SF1">
    <property type="entry name" value="PHOSPHOCARRIER PROTEIN HPR"/>
    <property type="match status" value="1"/>
</dbReference>
<dbReference type="Pfam" id="PF00381">
    <property type="entry name" value="PTS-HPr"/>
    <property type="match status" value="1"/>
</dbReference>
<dbReference type="PRINTS" id="PR00107">
    <property type="entry name" value="PHOSPHOCPHPR"/>
</dbReference>
<dbReference type="SUPFAM" id="SSF55594">
    <property type="entry name" value="HPr-like"/>
    <property type="match status" value="1"/>
</dbReference>
<dbReference type="PROSITE" id="PS51350">
    <property type="entry name" value="PTS_HPR_DOM"/>
    <property type="match status" value="1"/>
</dbReference>
<dbReference type="PROSITE" id="PS00369">
    <property type="entry name" value="PTS_HPR_HIS"/>
    <property type="match status" value="1"/>
</dbReference>
<dbReference type="PROSITE" id="PS00589">
    <property type="entry name" value="PTS_HPR_SER"/>
    <property type="match status" value="1"/>
</dbReference>
<gene>
    <name type="primary">ptsH</name>
    <name type="ordered locus">BB_0557</name>
</gene>
<feature type="chain" id="PRO_0000107843" description="Phosphocarrier protein HPr">
    <location>
        <begin position="1"/>
        <end position="86"/>
    </location>
</feature>
<feature type="domain" description="HPr" evidence="2">
    <location>
        <begin position="1"/>
        <end position="86"/>
    </location>
</feature>
<feature type="active site" description="Pros-phosphohistidine intermediate" evidence="2">
    <location>
        <position position="15"/>
    </location>
</feature>
<evidence type="ECO:0000250" key="1"/>
<evidence type="ECO:0000255" key="2">
    <source>
        <dbReference type="PROSITE-ProRule" id="PRU00681"/>
    </source>
</evidence>
<evidence type="ECO:0000305" key="3"/>
<comment type="function">
    <text evidence="1">General (non sugar-specific) component of the phosphoenolpyruvate-dependent sugar phosphotransferase system (sugar PTS). This major carbohydrate active-transport system catalyzes the phosphorylation of incoming sugar substrates concomitantly with their translocation across the cell membrane. The phosphoryl group from phosphoenolpyruvate (PEP) is transferred to the phosphoryl carrier protein HPr by enzyme I. Phospho-HPr then transfers it to the PTS EIIA domain.</text>
</comment>
<comment type="subcellular location">
    <subcellularLocation>
        <location evidence="1">Cytoplasm</location>
    </subcellularLocation>
</comment>
<comment type="similarity">
    <text evidence="3">Belongs to the HPr family.</text>
</comment>
<proteinExistence type="inferred from homology"/>
<accession>O51507</accession>
<sequence>MVKKEAIIKAVNGLHVRPASTFVKKAKEYSSEITIESDGKSVSGKSLFRLQTLELSSGKKLLICAEGEDEEIAASELAELIESFKE</sequence>
<reference key="1">
    <citation type="journal article" date="1997" name="Nature">
        <title>Genomic sequence of a Lyme disease spirochaete, Borrelia burgdorferi.</title>
        <authorList>
            <person name="Fraser C.M."/>
            <person name="Casjens S."/>
            <person name="Huang W.M."/>
            <person name="Sutton G.G."/>
            <person name="Clayton R.A."/>
            <person name="Lathigra R."/>
            <person name="White O."/>
            <person name="Ketchum K.A."/>
            <person name="Dodson R.J."/>
            <person name="Hickey E.K."/>
            <person name="Gwinn M.L."/>
            <person name="Dougherty B.A."/>
            <person name="Tomb J.-F."/>
            <person name="Fleischmann R.D."/>
            <person name="Richardson D.L."/>
            <person name="Peterson J.D."/>
            <person name="Kerlavage A.R."/>
            <person name="Quackenbush J."/>
            <person name="Salzberg S.L."/>
            <person name="Hanson M."/>
            <person name="van Vugt R."/>
            <person name="Palmer N."/>
            <person name="Adams M.D."/>
            <person name="Gocayne J.D."/>
            <person name="Weidman J.F."/>
            <person name="Utterback T.R."/>
            <person name="Watthey L."/>
            <person name="McDonald L.A."/>
            <person name="Artiach P."/>
            <person name="Bowman C."/>
            <person name="Garland S.A."/>
            <person name="Fujii C."/>
            <person name="Cotton M.D."/>
            <person name="Horst K."/>
            <person name="Roberts K.M."/>
            <person name="Hatch B."/>
            <person name="Smith H.O."/>
            <person name="Venter J.C."/>
        </authorList>
    </citation>
    <scope>NUCLEOTIDE SEQUENCE [LARGE SCALE GENOMIC DNA]</scope>
    <source>
        <strain>ATCC 35210 / DSM 4680 / CIP 102532 / B31</strain>
    </source>
</reference>